<sequence length="160" mass="16973">MTTFEGRFTDTADLRIAVVVARFNDLVTSKLLSGCLDCLSRHGIDTAETSSQLDVAWVPGSFELPIVAQNLAQSGRYQVVITLGAVIRGDTPHFDVVVAEASKGIATVARESGVPVIFGVLTTDTMQQALERAGIKSNLGWSYGLQALEMGSLMAALAQS</sequence>
<protein>
    <recommendedName>
        <fullName evidence="1">6,7-dimethyl-8-ribityllumazine synthase</fullName>
        <shortName evidence="1">DMRL synthase</shortName>
        <shortName evidence="1">LS</shortName>
        <shortName evidence="1">Lumazine synthase</shortName>
        <ecNumber evidence="1">2.5.1.78</ecNumber>
    </recommendedName>
</protein>
<keyword id="KW-0686">Riboflavin biosynthesis</keyword>
<keyword id="KW-0808">Transferase</keyword>
<name>RISB_PARMW</name>
<accession>Q7UA19</accession>
<feature type="chain" id="PRO_0000134820" description="6,7-dimethyl-8-ribityllumazine synthase">
    <location>
        <begin position="1"/>
        <end position="160"/>
    </location>
</feature>
<feature type="active site" description="Proton donor" evidence="1">
    <location>
        <position position="93"/>
    </location>
</feature>
<feature type="binding site" evidence="1">
    <location>
        <position position="23"/>
    </location>
    <ligand>
        <name>5-amino-6-(D-ribitylamino)uracil</name>
        <dbReference type="ChEBI" id="CHEBI:15934"/>
    </ligand>
</feature>
<feature type="binding site" evidence="1">
    <location>
        <begin position="61"/>
        <end position="63"/>
    </location>
    <ligand>
        <name>5-amino-6-(D-ribitylamino)uracil</name>
        <dbReference type="ChEBI" id="CHEBI:15934"/>
    </ligand>
</feature>
<feature type="binding site" evidence="1">
    <location>
        <begin position="85"/>
        <end position="87"/>
    </location>
    <ligand>
        <name>5-amino-6-(D-ribitylamino)uracil</name>
        <dbReference type="ChEBI" id="CHEBI:15934"/>
    </ligand>
</feature>
<feature type="binding site" evidence="1">
    <location>
        <begin position="90"/>
        <end position="91"/>
    </location>
    <ligand>
        <name>(2S)-2-hydroxy-3-oxobutyl phosphate</name>
        <dbReference type="ChEBI" id="CHEBI:58830"/>
    </ligand>
</feature>
<feature type="binding site" evidence="1">
    <location>
        <position position="118"/>
    </location>
    <ligand>
        <name>5-amino-6-(D-ribitylamino)uracil</name>
        <dbReference type="ChEBI" id="CHEBI:15934"/>
    </ligand>
</feature>
<feature type="binding site" evidence="1">
    <location>
        <position position="132"/>
    </location>
    <ligand>
        <name>(2S)-2-hydroxy-3-oxobutyl phosphate</name>
        <dbReference type="ChEBI" id="CHEBI:58830"/>
    </ligand>
</feature>
<dbReference type="EC" id="2.5.1.78" evidence="1"/>
<dbReference type="EMBL" id="BX569689">
    <property type="protein sequence ID" value="CAE06597.1"/>
    <property type="molecule type" value="Genomic_DNA"/>
</dbReference>
<dbReference type="RefSeq" id="WP_011126960.1">
    <property type="nucleotide sequence ID" value="NC_005070.1"/>
</dbReference>
<dbReference type="SMR" id="Q7UA19"/>
<dbReference type="STRING" id="84588.SYNW0082"/>
<dbReference type="KEGG" id="syw:SYNW0082"/>
<dbReference type="eggNOG" id="COG0054">
    <property type="taxonomic scope" value="Bacteria"/>
</dbReference>
<dbReference type="HOGENOM" id="CLU_089358_1_0_3"/>
<dbReference type="UniPathway" id="UPA00275">
    <property type="reaction ID" value="UER00404"/>
</dbReference>
<dbReference type="Proteomes" id="UP000001422">
    <property type="component" value="Chromosome"/>
</dbReference>
<dbReference type="GO" id="GO:0005829">
    <property type="term" value="C:cytosol"/>
    <property type="evidence" value="ECO:0007669"/>
    <property type="project" value="TreeGrafter"/>
</dbReference>
<dbReference type="GO" id="GO:0009349">
    <property type="term" value="C:riboflavin synthase complex"/>
    <property type="evidence" value="ECO:0007669"/>
    <property type="project" value="InterPro"/>
</dbReference>
<dbReference type="GO" id="GO:0000906">
    <property type="term" value="F:6,7-dimethyl-8-ribityllumazine synthase activity"/>
    <property type="evidence" value="ECO:0007669"/>
    <property type="project" value="UniProtKB-UniRule"/>
</dbReference>
<dbReference type="GO" id="GO:0009231">
    <property type="term" value="P:riboflavin biosynthetic process"/>
    <property type="evidence" value="ECO:0007669"/>
    <property type="project" value="UniProtKB-UniRule"/>
</dbReference>
<dbReference type="CDD" id="cd09209">
    <property type="entry name" value="Lumazine_synthase-I"/>
    <property type="match status" value="1"/>
</dbReference>
<dbReference type="Gene3D" id="3.40.50.960">
    <property type="entry name" value="Lumazine/riboflavin synthase"/>
    <property type="match status" value="1"/>
</dbReference>
<dbReference type="HAMAP" id="MF_00178">
    <property type="entry name" value="Lumazine_synth"/>
    <property type="match status" value="1"/>
</dbReference>
<dbReference type="InterPro" id="IPR034964">
    <property type="entry name" value="LS"/>
</dbReference>
<dbReference type="InterPro" id="IPR002180">
    <property type="entry name" value="LS/RS"/>
</dbReference>
<dbReference type="InterPro" id="IPR036467">
    <property type="entry name" value="LS/RS_sf"/>
</dbReference>
<dbReference type="NCBIfam" id="TIGR00114">
    <property type="entry name" value="lumazine-synth"/>
    <property type="match status" value="1"/>
</dbReference>
<dbReference type="PANTHER" id="PTHR21058:SF0">
    <property type="entry name" value="6,7-DIMETHYL-8-RIBITYLLUMAZINE SYNTHASE"/>
    <property type="match status" value="1"/>
</dbReference>
<dbReference type="PANTHER" id="PTHR21058">
    <property type="entry name" value="6,7-DIMETHYL-8-RIBITYLLUMAZINE SYNTHASE DMRL SYNTHASE LUMAZINE SYNTHASE"/>
    <property type="match status" value="1"/>
</dbReference>
<dbReference type="Pfam" id="PF00885">
    <property type="entry name" value="DMRL_synthase"/>
    <property type="match status" value="1"/>
</dbReference>
<dbReference type="SUPFAM" id="SSF52121">
    <property type="entry name" value="Lumazine synthase"/>
    <property type="match status" value="1"/>
</dbReference>
<gene>
    <name evidence="1" type="primary">ribH</name>
    <name type="ordered locus">SYNW0082</name>
</gene>
<proteinExistence type="inferred from homology"/>
<organism>
    <name type="scientific">Parasynechococcus marenigrum (strain WH8102)</name>
    <dbReference type="NCBI Taxonomy" id="84588"/>
    <lineage>
        <taxon>Bacteria</taxon>
        <taxon>Bacillati</taxon>
        <taxon>Cyanobacteriota</taxon>
        <taxon>Cyanophyceae</taxon>
        <taxon>Synechococcales</taxon>
        <taxon>Prochlorococcaceae</taxon>
        <taxon>Parasynechococcus</taxon>
        <taxon>Parasynechococcus marenigrum</taxon>
    </lineage>
</organism>
<comment type="function">
    <text evidence="1">Catalyzes the formation of 6,7-dimethyl-8-ribityllumazine by condensation of 5-amino-6-(D-ribitylamino)uracil with 3,4-dihydroxy-2-butanone 4-phosphate. This is the penultimate step in the biosynthesis of riboflavin.</text>
</comment>
<comment type="catalytic activity">
    <reaction evidence="1">
        <text>(2S)-2-hydroxy-3-oxobutyl phosphate + 5-amino-6-(D-ribitylamino)uracil = 6,7-dimethyl-8-(1-D-ribityl)lumazine + phosphate + 2 H2O + H(+)</text>
        <dbReference type="Rhea" id="RHEA:26152"/>
        <dbReference type="ChEBI" id="CHEBI:15377"/>
        <dbReference type="ChEBI" id="CHEBI:15378"/>
        <dbReference type="ChEBI" id="CHEBI:15934"/>
        <dbReference type="ChEBI" id="CHEBI:43474"/>
        <dbReference type="ChEBI" id="CHEBI:58201"/>
        <dbReference type="ChEBI" id="CHEBI:58830"/>
        <dbReference type="EC" id="2.5.1.78"/>
    </reaction>
</comment>
<comment type="pathway">
    <text evidence="1">Cofactor biosynthesis; riboflavin biosynthesis; riboflavin from 2-hydroxy-3-oxobutyl phosphate and 5-amino-6-(D-ribitylamino)uracil: step 1/2.</text>
</comment>
<comment type="similarity">
    <text evidence="1">Belongs to the DMRL synthase family.</text>
</comment>
<evidence type="ECO:0000255" key="1">
    <source>
        <dbReference type="HAMAP-Rule" id="MF_00178"/>
    </source>
</evidence>
<reference key="1">
    <citation type="journal article" date="2003" name="Nature">
        <title>The genome of a motile marine Synechococcus.</title>
        <authorList>
            <person name="Palenik B."/>
            <person name="Brahamsha B."/>
            <person name="Larimer F.W."/>
            <person name="Land M.L."/>
            <person name="Hauser L."/>
            <person name="Chain P."/>
            <person name="Lamerdin J.E."/>
            <person name="Regala W."/>
            <person name="Allen E.E."/>
            <person name="McCarren J."/>
            <person name="Paulsen I.T."/>
            <person name="Dufresne A."/>
            <person name="Partensky F."/>
            <person name="Webb E.A."/>
            <person name="Waterbury J."/>
        </authorList>
    </citation>
    <scope>NUCLEOTIDE SEQUENCE [LARGE SCALE GENOMIC DNA]</scope>
    <source>
        <strain>WH8102</strain>
    </source>
</reference>